<comment type="function">
    <text evidence="1">DNA-binding global transcriptional regulator which is involved in the adaptive response to starvation and acts by directly or indirectly controlling the expression of numerous genes in response to nutrient availability. During rapid exponential growth, CodY is highly active and represses genes whose products allow adaptation to nutrient depletion.</text>
</comment>
<comment type="subcellular location">
    <subcellularLocation>
        <location evidence="1">Cytoplasm</location>
    </subcellularLocation>
</comment>
<comment type="similarity">
    <text evidence="1">Belongs to the CodY family.</text>
</comment>
<gene>
    <name evidence="1" type="primary">codY</name>
    <name type="ordered locus">LL0161</name>
    <name type="ORF">L0243</name>
</gene>
<evidence type="ECO:0000255" key="1">
    <source>
        <dbReference type="HAMAP-Rule" id="MF_00621"/>
    </source>
</evidence>
<keyword id="KW-0963">Cytoplasm</keyword>
<keyword id="KW-0238">DNA-binding</keyword>
<keyword id="KW-1185">Reference proteome</keyword>
<keyword id="KW-0678">Repressor</keyword>
<keyword id="KW-0804">Transcription</keyword>
<keyword id="KW-0805">Transcription regulation</keyword>
<organism>
    <name type="scientific">Lactococcus lactis subsp. lactis (strain IL1403)</name>
    <name type="common">Streptococcus lactis</name>
    <dbReference type="NCBI Taxonomy" id="272623"/>
    <lineage>
        <taxon>Bacteria</taxon>
        <taxon>Bacillati</taxon>
        <taxon>Bacillota</taxon>
        <taxon>Bacilli</taxon>
        <taxon>Lactobacillales</taxon>
        <taxon>Streptococcaceae</taxon>
        <taxon>Lactococcus</taxon>
    </lineage>
</organism>
<name>CODY_LACLA</name>
<protein>
    <recommendedName>
        <fullName evidence="1">Global transcriptional regulator CodY</fullName>
    </recommendedName>
</protein>
<proteinExistence type="inferred from homology"/>
<feature type="chain" id="PRO_0000213226" description="Global transcriptional regulator CodY">
    <location>
        <begin position="1"/>
        <end position="262"/>
    </location>
</feature>
<feature type="DNA-binding region" description="H-T-H motif" evidence="1">
    <location>
        <begin position="207"/>
        <end position="226"/>
    </location>
</feature>
<feature type="region of interest" description="GAF domain" evidence="1">
    <location>
        <begin position="1"/>
        <end position="159"/>
    </location>
</feature>
<reference key="1">
    <citation type="journal article" date="2001" name="Genome Res.">
        <title>The complete genome sequence of the lactic acid bacterium Lactococcus lactis ssp. lactis IL1403.</title>
        <authorList>
            <person name="Bolotin A."/>
            <person name="Wincker P."/>
            <person name="Mauger S."/>
            <person name="Jaillon O."/>
            <person name="Malarme K."/>
            <person name="Weissenbach J."/>
            <person name="Ehrlich S.D."/>
            <person name="Sorokin A."/>
        </authorList>
    </citation>
    <scope>NUCLEOTIDE SEQUENCE [LARGE SCALE GENOMIC DNA]</scope>
    <source>
        <strain>IL1403</strain>
    </source>
</reference>
<sequence length="262" mass="29128">MATLLEKTRKITAILQDGVTDLQQELPYNSMTERLANVIDCNACVINTKGELLGYSLPYNTNNDRVDQFFYDRKLPDEYVRAAVRIYDTMANVPVDRPLAIFPEESLGDFPKGVTTLAPIYGSGMRLGTFIMWREDGEFTDDDLVLVELATTVIGVQLSNLKLEQMEENIRKDTMATMAVNTLSYSEMKAVKAIIEELDGEEGHVIASVIADKIGITRSVIVNALRKLESAGVIESRSLGMKGTYLKVLNTGLFDKLAGRNF</sequence>
<accession>Q9CJ45</accession>
<dbReference type="EMBL" id="AE005176">
    <property type="protein sequence ID" value="AAK04259.1"/>
    <property type="molecule type" value="Genomic_DNA"/>
</dbReference>
<dbReference type="PIR" id="A86645">
    <property type="entry name" value="A86645"/>
</dbReference>
<dbReference type="RefSeq" id="NP_266317.1">
    <property type="nucleotide sequence ID" value="NC_002662.1"/>
</dbReference>
<dbReference type="RefSeq" id="WP_003129722.1">
    <property type="nucleotide sequence ID" value="NC_002662.1"/>
</dbReference>
<dbReference type="SMR" id="Q9CJ45"/>
<dbReference type="PaxDb" id="272623-L0243"/>
<dbReference type="EnsemblBacteria" id="AAK04259">
    <property type="protein sequence ID" value="AAK04259"/>
    <property type="gene ID" value="L0243"/>
</dbReference>
<dbReference type="GeneID" id="89632301"/>
<dbReference type="KEGG" id="lla:L0243"/>
<dbReference type="PATRIC" id="fig|272623.7.peg.178"/>
<dbReference type="eggNOG" id="COG4465">
    <property type="taxonomic scope" value="Bacteria"/>
</dbReference>
<dbReference type="HOGENOM" id="CLU_089581_0_0_9"/>
<dbReference type="OrthoDB" id="2056at2"/>
<dbReference type="Proteomes" id="UP000002196">
    <property type="component" value="Chromosome"/>
</dbReference>
<dbReference type="GO" id="GO:0005737">
    <property type="term" value="C:cytoplasm"/>
    <property type="evidence" value="ECO:0007669"/>
    <property type="project" value="UniProtKB-SubCell"/>
</dbReference>
<dbReference type="GO" id="GO:0003677">
    <property type="term" value="F:DNA binding"/>
    <property type="evidence" value="ECO:0007669"/>
    <property type="project" value="UniProtKB-UniRule"/>
</dbReference>
<dbReference type="GO" id="GO:0003700">
    <property type="term" value="F:DNA-binding transcription factor activity"/>
    <property type="evidence" value="ECO:0007669"/>
    <property type="project" value="InterPro"/>
</dbReference>
<dbReference type="GO" id="GO:0005525">
    <property type="term" value="F:GTP binding"/>
    <property type="evidence" value="ECO:0007669"/>
    <property type="project" value="InterPro"/>
</dbReference>
<dbReference type="GO" id="GO:0045892">
    <property type="term" value="P:negative regulation of DNA-templated transcription"/>
    <property type="evidence" value="ECO:0007669"/>
    <property type="project" value="UniProtKB-UniRule"/>
</dbReference>
<dbReference type="FunFam" id="1.10.10.10:FF:000034">
    <property type="entry name" value="GTP-sensing transcriptional pleiotropic repressor CodY"/>
    <property type="match status" value="1"/>
</dbReference>
<dbReference type="FunFam" id="3.30.450.40:FF:000003">
    <property type="entry name" value="GTP-sensing transcriptional pleiotropic repressor CodY"/>
    <property type="match status" value="1"/>
</dbReference>
<dbReference type="Gene3D" id="3.30.450.40">
    <property type="match status" value="1"/>
</dbReference>
<dbReference type="Gene3D" id="1.10.10.10">
    <property type="entry name" value="Winged helix-like DNA-binding domain superfamily/Winged helix DNA-binding domain"/>
    <property type="match status" value="1"/>
</dbReference>
<dbReference type="HAMAP" id="MF_00621">
    <property type="entry name" value="HTH_type_CodY"/>
    <property type="match status" value="1"/>
</dbReference>
<dbReference type="InterPro" id="IPR014154">
    <property type="entry name" value="CodY"/>
</dbReference>
<dbReference type="InterPro" id="IPR029016">
    <property type="entry name" value="GAF-like_dom_sf"/>
</dbReference>
<dbReference type="InterPro" id="IPR013198">
    <property type="entry name" value="GTP_trans_reg_CodY_C"/>
</dbReference>
<dbReference type="InterPro" id="IPR010312">
    <property type="entry name" value="Transc_reg_CodY_N"/>
</dbReference>
<dbReference type="InterPro" id="IPR036388">
    <property type="entry name" value="WH-like_DNA-bd_sf"/>
</dbReference>
<dbReference type="InterPro" id="IPR036390">
    <property type="entry name" value="WH_DNA-bd_sf"/>
</dbReference>
<dbReference type="NCBIfam" id="TIGR02787">
    <property type="entry name" value="codY_Gpos"/>
    <property type="match status" value="1"/>
</dbReference>
<dbReference type="NCBIfam" id="NF003170">
    <property type="entry name" value="PRK04158.1"/>
    <property type="match status" value="1"/>
</dbReference>
<dbReference type="PANTHER" id="PTHR40062:SF1">
    <property type="entry name" value="GLOBAL TRANSCRIPTIONAL REGULATOR CODY"/>
    <property type="match status" value="1"/>
</dbReference>
<dbReference type="PANTHER" id="PTHR40062">
    <property type="entry name" value="GTP-SENSING TRANSCRIPTIONAL PLEIOTROPIC REPRESSOR CODY"/>
    <property type="match status" value="1"/>
</dbReference>
<dbReference type="Pfam" id="PF06018">
    <property type="entry name" value="CodY"/>
    <property type="match status" value="1"/>
</dbReference>
<dbReference type="Pfam" id="PF08222">
    <property type="entry name" value="HTH_CodY"/>
    <property type="match status" value="1"/>
</dbReference>
<dbReference type="PIRSF" id="PIRSF011572">
    <property type="entry name" value="GTP_sensing_CodY"/>
    <property type="match status" value="1"/>
</dbReference>
<dbReference type="SUPFAM" id="SSF46785">
    <property type="entry name" value="Winged helix' DNA-binding domain"/>
    <property type="match status" value="1"/>
</dbReference>